<gene>
    <name evidence="1" type="primary">rsmG</name>
    <name type="ordered locus">Syncc9902_0617</name>
</gene>
<sequence length="243" mass="26376">MADATPGAEYWTALGWQPSTEQVDQLATLQTLLREWNEKVNLTRLVEGDDYWINQVFDSLWPLAHELKTPHQPRTCIDVGTGGGFPGLAIAIALPGSHMTLLDSVGRKTAAVEAMASRLGLADRVAVRTERIETTGHDRACRGQFDLAMARAVAAAPVVAEYLVPLLKPKGEALLFRGQWSEEDTTEFSSVISPLKAQLTGVQTCQLPAKRGIRHLLRVQPIGSCPSSYPRAVGIPSRTPLGS</sequence>
<protein>
    <recommendedName>
        <fullName evidence="1">Ribosomal RNA small subunit methyltransferase G</fullName>
        <ecNumber evidence="1">2.1.1.-</ecNumber>
    </recommendedName>
    <alternativeName>
        <fullName evidence="1">16S rRNA 7-methylguanosine methyltransferase</fullName>
        <shortName evidence="1">16S rRNA m7G methyltransferase</shortName>
    </alternativeName>
</protein>
<dbReference type="EC" id="2.1.1.-" evidence="1"/>
<dbReference type="EMBL" id="CP000097">
    <property type="protein sequence ID" value="ABB25585.1"/>
    <property type="molecule type" value="Genomic_DNA"/>
</dbReference>
<dbReference type="RefSeq" id="WP_011359430.1">
    <property type="nucleotide sequence ID" value="NC_007513.1"/>
</dbReference>
<dbReference type="SMR" id="Q3AZ92"/>
<dbReference type="STRING" id="316279.Syncc9902_0617"/>
<dbReference type="KEGG" id="sye:Syncc9902_0617"/>
<dbReference type="eggNOG" id="COG0357">
    <property type="taxonomic scope" value="Bacteria"/>
</dbReference>
<dbReference type="HOGENOM" id="CLU_065341_0_2_3"/>
<dbReference type="OrthoDB" id="9808773at2"/>
<dbReference type="Proteomes" id="UP000002712">
    <property type="component" value="Chromosome"/>
</dbReference>
<dbReference type="GO" id="GO:0005829">
    <property type="term" value="C:cytosol"/>
    <property type="evidence" value="ECO:0007669"/>
    <property type="project" value="TreeGrafter"/>
</dbReference>
<dbReference type="GO" id="GO:0070043">
    <property type="term" value="F:rRNA (guanine-N7-)-methyltransferase activity"/>
    <property type="evidence" value="ECO:0007669"/>
    <property type="project" value="UniProtKB-UniRule"/>
</dbReference>
<dbReference type="Gene3D" id="3.40.50.150">
    <property type="entry name" value="Vaccinia Virus protein VP39"/>
    <property type="match status" value="1"/>
</dbReference>
<dbReference type="HAMAP" id="MF_00074">
    <property type="entry name" value="16SrRNA_methyltr_G"/>
    <property type="match status" value="1"/>
</dbReference>
<dbReference type="InterPro" id="IPR003682">
    <property type="entry name" value="rRNA_ssu_MeTfrase_G"/>
</dbReference>
<dbReference type="InterPro" id="IPR029063">
    <property type="entry name" value="SAM-dependent_MTases_sf"/>
</dbReference>
<dbReference type="NCBIfam" id="TIGR00138">
    <property type="entry name" value="rsmG_gidB"/>
    <property type="match status" value="1"/>
</dbReference>
<dbReference type="PANTHER" id="PTHR31760">
    <property type="entry name" value="S-ADENOSYL-L-METHIONINE-DEPENDENT METHYLTRANSFERASES SUPERFAMILY PROTEIN"/>
    <property type="match status" value="1"/>
</dbReference>
<dbReference type="PANTHER" id="PTHR31760:SF0">
    <property type="entry name" value="S-ADENOSYL-L-METHIONINE-DEPENDENT METHYLTRANSFERASES SUPERFAMILY PROTEIN"/>
    <property type="match status" value="1"/>
</dbReference>
<dbReference type="Pfam" id="PF02527">
    <property type="entry name" value="GidB"/>
    <property type="match status" value="1"/>
</dbReference>
<dbReference type="PIRSF" id="PIRSF003078">
    <property type="entry name" value="GidB"/>
    <property type="match status" value="1"/>
</dbReference>
<dbReference type="SUPFAM" id="SSF53335">
    <property type="entry name" value="S-adenosyl-L-methionine-dependent methyltransferases"/>
    <property type="match status" value="1"/>
</dbReference>
<reference key="1">
    <citation type="submission" date="2005-08" db="EMBL/GenBank/DDBJ databases">
        <title>Complete sequence of Synechococcus sp. CC9902.</title>
        <authorList>
            <person name="Copeland A."/>
            <person name="Lucas S."/>
            <person name="Lapidus A."/>
            <person name="Barry K."/>
            <person name="Detter J.C."/>
            <person name="Glavina T."/>
            <person name="Hammon N."/>
            <person name="Israni S."/>
            <person name="Pitluck S."/>
            <person name="Martinez M."/>
            <person name="Schmutz J."/>
            <person name="Larimer F."/>
            <person name="Land M."/>
            <person name="Kyrpides N."/>
            <person name="Ivanova N."/>
            <person name="Richardson P."/>
        </authorList>
    </citation>
    <scope>NUCLEOTIDE SEQUENCE [LARGE SCALE GENOMIC DNA]</scope>
    <source>
        <strain>CC9902</strain>
    </source>
</reference>
<evidence type="ECO:0000255" key="1">
    <source>
        <dbReference type="HAMAP-Rule" id="MF_00074"/>
    </source>
</evidence>
<feature type="chain" id="PRO_0000335438" description="Ribosomal RNA small subunit methyltransferase G">
    <location>
        <begin position="1"/>
        <end position="243"/>
    </location>
</feature>
<feature type="binding site" evidence="1">
    <location>
        <position position="80"/>
    </location>
    <ligand>
        <name>S-adenosyl-L-methionine</name>
        <dbReference type="ChEBI" id="CHEBI:59789"/>
    </ligand>
</feature>
<feature type="binding site" evidence="1">
    <location>
        <position position="85"/>
    </location>
    <ligand>
        <name>S-adenosyl-L-methionine</name>
        <dbReference type="ChEBI" id="CHEBI:59789"/>
    </ligand>
</feature>
<feature type="binding site" evidence="1">
    <location>
        <begin position="132"/>
        <end position="133"/>
    </location>
    <ligand>
        <name>S-adenosyl-L-methionine</name>
        <dbReference type="ChEBI" id="CHEBI:59789"/>
    </ligand>
</feature>
<feature type="binding site" evidence="1">
    <location>
        <position position="151"/>
    </location>
    <ligand>
        <name>S-adenosyl-L-methionine</name>
        <dbReference type="ChEBI" id="CHEBI:59789"/>
    </ligand>
</feature>
<name>RSMG_SYNS9</name>
<organism>
    <name type="scientific">Synechococcus sp. (strain CC9902)</name>
    <dbReference type="NCBI Taxonomy" id="316279"/>
    <lineage>
        <taxon>Bacteria</taxon>
        <taxon>Bacillati</taxon>
        <taxon>Cyanobacteriota</taxon>
        <taxon>Cyanophyceae</taxon>
        <taxon>Synechococcales</taxon>
        <taxon>Synechococcaceae</taxon>
        <taxon>Synechococcus</taxon>
    </lineage>
</organism>
<keyword id="KW-0963">Cytoplasm</keyword>
<keyword id="KW-0489">Methyltransferase</keyword>
<keyword id="KW-1185">Reference proteome</keyword>
<keyword id="KW-0698">rRNA processing</keyword>
<keyword id="KW-0949">S-adenosyl-L-methionine</keyword>
<keyword id="KW-0808">Transferase</keyword>
<accession>Q3AZ92</accession>
<comment type="function">
    <text evidence="1">Specifically methylates the N7 position of a guanine in 16S rRNA.</text>
</comment>
<comment type="subcellular location">
    <subcellularLocation>
        <location evidence="1">Cytoplasm</location>
    </subcellularLocation>
</comment>
<comment type="similarity">
    <text evidence="1">Belongs to the methyltransferase superfamily. RNA methyltransferase RsmG family.</text>
</comment>
<proteinExistence type="inferred from homology"/>